<feature type="chain" id="PRO_1000075793" description="Ribonuclease 3">
    <location>
        <begin position="1"/>
        <end position="256"/>
    </location>
</feature>
<feature type="domain" description="RNase III" evidence="1">
    <location>
        <begin position="3"/>
        <end position="125"/>
    </location>
</feature>
<feature type="domain" description="DRBM" evidence="1">
    <location>
        <begin position="152"/>
        <end position="222"/>
    </location>
</feature>
<feature type="region of interest" description="Disordered" evidence="2">
    <location>
        <begin position="230"/>
        <end position="256"/>
    </location>
</feature>
<feature type="active site" evidence="1">
    <location>
        <position position="42"/>
    </location>
</feature>
<feature type="active site" evidence="1">
    <location>
        <position position="114"/>
    </location>
</feature>
<feature type="binding site" evidence="1">
    <location>
        <position position="38"/>
    </location>
    <ligand>
        <name>Mg(2+)</name>
        <dbReference type="ChEBI" id="CHEBI:18420"/>
    </ligand>
</feature>
<feature type="binding site" evidence="1">
    <location>
        <position position="111"/>
    </location>
    <ligand>
        <name>Mg(2+)</name>
        <dbReference type="ChEBI" id="CHEBI:18420"/>
    </ligand>
</feature>
<feature type="binding site" evidence="1">
    <location>
        <position position="114"/>
    </location>
    <ligand>
        <name>Mg(2+)</name>
        <dbReference type="ChEBI" id="CHEBI:18420"/>
    </ligand>
</feature>
<evidence type="ECO:0000255" key="1">
    <source>
        <dbReference type="HAMAP-Rule" id="MF_00104"/>
    </source>
</evidence>
<evidence type="ECO:0000256" key="2">
    <source>
        <dbReference type="SAM" id="MobiDB-lite"/>
    </source>
</evidence>
<accession>Q0K8N3</accession>
<name>RNC_CUPNH</name>
<protein>
    <recommendedName>
        <fullName evidence="1">Ribonuclease 3</fullName>
        <ecNumber evidence="1">3.1.26.3</ecNumber>
    </recommendedName>
    <alternativeName>
        <fullName evidence="1">Ribonuclease III</fullName>
        <shortName evidence="1">RNase III</shortName>
    </alternativeName>
</protein>
<organism>
    <name type="scientific">Cupriavidus necator (strain ATCC 17699 / DSM 428 / KCTC 22496 / NCIMB 10442 / H16 / Stanier 337)</name>
    <name type="common">Ralstonia eutropha</name>
    <dbReference type="NCBI Taxonomy" id="381666"/>
    <lineage>
        <taxon>Bacteria</taxon>
        <taxon>Pseudomonadati</taxon>
        <taxon>Pseudomonadota</taxon>
        <taxon>Betaproteobacteria</taxon>
        <taxon>Burkholderiales</taxon>
        <taxon>Burkholderiaceae</taxon>
        <taxon>Cupriavidus</taxon>
    </lineage>
</organism>
<keyword id="KW-0963">Cytoplasm</keyword>
<keyword id="KW-0255">Endonuclease</keyword>
<keyword id="KW-0378">Hydrolase</keyword>
<keyword id="KW-0460">Magnesium</keyword>
<keyword id="KW-0479">Metal-binding</keyword>
<keyword id="KW-0507">mRNA processing</keyword>
<keyword id="KW-0540">Nuclease</keyword>
<keyword id="KW-1185">Reference proteome</keyword>
<keyword id="KW-0694">RNA-binding</keyword>
<keyword id="KW-0698">rRNA processing</keyword>
<keyword id="KW-0699">rRNA-binding</keyword>
<keyword id="KW-0819">tRNA processing</keyword>
<sequence length="256" mass="28490">MNLDALQQRLGYRFSKPELLQQALTHRSHSAQHNERLEFLGDSVLNCAVADMLYGMFGKLDEGDLSRVRANLVKQQALYEIAQMLQLSDTLRLGEGELKSGGFRRPSILADALEAIVGAVFLDAGFDAARALIRKLYIPILEQVDPRTLGKDAKTLLQEYLQGHKIALPQYNVIATHGAAHSQQFEVECTVPKLEVRVFGTGASRRAAEQAAAKLALDEVQKLVPQLLKRSRAERTGKTRKQPVPQDPQLSLRLKE</sequence>
<proteinExistence type="inferred from homology"/>
<gene>
    <name evidence="1" type="primary">rnc</name>
    <name type="ordered locus">H16_A2555</name>
</gene>
<reference key="1">
    <citation type="journal article" date="2006" name="Nat. Biotechnol.">
        <title>Genome sequence of the bioplastic-producing 'Knallgas' bacterium Ralstonia eutropha H16.</title>
        <authorList>
            <person name="Pohlmann A."/>
            <person name="Fricke W.F."/>
            <person name="Reinecke F."/>
            <person name="Kusian B."/>
            <person name="Liesegang H."/>
            <person name="Cramm R."/>
            <person name="Eitinger T."/>
            <person name="Ewering C."/>
            <person name="Poetter M."/>
            <person name="Schwartz E."/>
            <person name="Strittmatter A."/>
            <person name="Voss I."/>
            <person name="Gottschalk G."/>
            <person name="Steinbuechel A."/>
            <person name="Friedrich B."/>
            <person name="Bowien B."/>
        </authorList>
    </citation>
    <scope>NUCLEOTIDE SEQUENCE [LARGE SCALE GENOMIC DNA]</scope>
    <source>
        <strain>ATCC 17699 / DSM 428 / KCTC 22496 / NCIMB 10442 / H16 / Stanier 337</strain>
    </source>
</reference>
<dbReference type="EC" id="3.1.26.3" evidence="1"/>
<dbReference type="EMBL" id="AM260479">
    <property type="protein sequence ID" value="CAJ93638.1"/>
    <property type="molecule type" value="Genomic_DNA"/>
</dbReference>
<dbReference type="RefSeq" id="WP_010814690.1">
    <property type="nucleotide sequence ID" value="NZ_CP039287.1"/>
</dbReference>
<dbReference type="SMR" id="Q0K8N3"/>
<dbReference type="STRING" id="381666.H16_A2555"/>
<dbReference type="GeneID" id="34308147"/>
<dbReference type="KEGG" id="reh:H16_A2555"/>
<dbReference type="eggNOG" id="COG0571">
    <property type="taxonomic scope" value="Bacteria"/>
</dbReference>
<dbReference type="HOGENOM" id="CLU_000907_1_1_4"/>
<dbReference type="OrthoDB" id="9805026at2"/>
<dbReference type="Proteomes" id="UP000008210">
    <property type="component" value="Chromosome 1"/>
</dbReference>
<dbReference type="GO" id="GO:0005737">
    <property type="term" value="C:cytoplasm"/>
    <property type="evidence" value="ECO:0007669"/>
    <property type="project" value="UniProtKB-SubCell"/>
</dbReference>
<dbReference type="GO" id="GO:0003725">
    <property type="term" value="F:double-stranded RNA binding"/>
    <property type="evidence" value="ECO:0007669"/>
    <property type="project" value="TreeGrafter"/>
</dbReference>
<dbReference type="GO" id="GO:0046872">
    <property type="term" value="F:metal ion binding"/>
    <property type="evidence" value="ECO:0007669"/>
    <property type="project" value="UniProtKB-KW"/>
</dbReference>
<dbReference type="GO" id="GO:0004525">
    <property type="term" value="F:ribonuclease III activity"/>
    <property type="evidence" value="ECO:0007669"/>
    <property type="project" value="UniProtKB-UniRule"/>
</dbReference>
<dbReference type="GO" id="GO:0019843">
    <property type="term" value="F:rRNA binding"/>
    <property type="evidence" value="ECO:0007669"/>
    <property type="project" value="UniProtKB-KW"/>
</dbReference>
<dbReference type="GO" id="GO:0006397">
    <property type="term" value="P:mRNA processing"/>
    <property type="evidence" value="ECO:0007669"/>
    <property type="project" value="UniProtKB-UniRule"/>
</dbReference>
<dbReference type="GO" id="GO:0010468">
    <property type="term" value="P:regulation of gene expression"/>
    <property type="evidence" value="ECO:0007669"/>
    <property type="project" value="TreeGrafter"/>
</dbReference>
<dbReference type="GO" id="GO:0006364">
    <property type="term" value="P:rRNA processing"/>
    <property type="evidence" value="ECO:0007669"/>
    <property type="project" value="UniProtKB-UniRule"/>
</dbReference>
<dbReference type="GO" id="GO:0008033">
    <property type="term" value="P:tRNA processing"/>
    <property type="evidence" value="ECO:0007669"/>
    <property type="project" value="UniProtKB-KW"/>
</dbReference>
<dbReference type="CDD" id="cd10845">
    <property type="entry name" value="DSRM_RNAse_III_family"/>
    <property type="match status" value="1"/>
</dbReference>
<dbReference type="CDD" id="cd00593">
    <property type="entry name" value="RIBOc"/>
    <property type="match status" value="1"/>
</dbReference>
<dbReference type="FunFam" id="1.10.1520.10:FF:000001">
    <property type="entry name" value="Ribonuclease 3"/>
    <property type="match status" value="1"/>
</dbReference>
<dbReference type="FunFam" id="3.30.160.20:FF:000003">
    <property type="entry name" value="Ribonuclease 3"/>
    <property type="match status" value="1"/>
</dbReference>
<dbReference type="Gene3D" id="3.30.160.20">
    <property type="match status" value="1"/>
</dbReference>
<dbReference type="Gene3D" id="1.10.1520.10">
    <property type="entry name" value="Ribonuclease III domain"/>
    <property type="match status" value="1"/>
</dbReference>
<dbReference type="HAMAP" id="MF_00104">
    <property type="entry name" value="RNase_III"/>
    <property type="match status" value="1"/>
</dbReference>
<dbReference type="InterPro" id="IPR014720">
    <property type="entry name" value="dsRBD_dom"/>
</dbReference>
<dbReference type="InterPro" id="IPR011907">
    <property type="entry name" value="RNase_III"/>
</dbReference>
<dbReference type="InterPro" id="IPR000999">
    <property type="entry name" value="RNase_III_dom"/>
</dbReference>
<dbReference type="InterPro" id="IPR036389">
    <property type="entry name" value="RNase_III_sf"/>
</dbReference>
<dbReference type="NCBIfam" id="TIGR02191">
    <property type="entry name" value="RNaseIII"/>
    <property type="match status" value="1"/>
</dbReference>
<dbReference type="PANTHER" id="PTHR11207:SF0">
    <property type="entry name" value="RIBONUCLEASE 3"/>
    <property type="match status" value="1"/>
</dbReference>
<dbReference type="PANTHER" id="PTHR11207">
    <property type="entry name" value="RIBONUCLEASE III"/>
    <property type="match status" value="1"/>
</dbReference>
<dbReference type="Pfam" id="PF00035">
    <property type="entry name" value="dsrm"/>
    <property type="match status" value="1"/>
</dbReference>
<dbReference type="Pfam" id="PF14622">
    <property type="entry name" value="Ribonucleas_3_3"/>
    <property type="match status" value="1"/>
</dbReference>
<dbReference type="SMART" id="SM00358">
    <property type="entry name" value="DSRM"/>
    <property type="match status" value="1"/>
</dbReference>
<dbReference type="SMART" id="SM00535">
    <property type="entry name" value="RIBOc"/>
    <property type="match status" value="1"/>
</dbReference>
<dbReference type="SUPFAM" id="SSF54768">
    <property type="entry name" value="dsRNA-binding domain-like"/>
    <property type="match status" value="1"/>
</dbReference>
<dbReference type="SUPFAM" id="SSF69065">
    <property type="entry name" value="RNase III domain-like"/>
    <property type="match status" value="1"/>
</dbReference>
<dbReference type="PROSITE" id="PS50137">
    <property type="entry name" value="DS_RBD"/>
    <property type="match status" value="1"/>
</dbReference>
<dbReference type="PROSITE" id="PS00517">
    <property type="entry name" value="RNASE_3_1"/>
    <property type="match status" value="1"/>
</dbReference>
<dbReference type="PROSITE" id="PS50142">
    <property type="entry name" value="RNASE_3_2"/>
    <property type="match status" value="1"/>
</dbReference>
<comment type="function">
    <text evidence="1">Digests double-stranded RNA. Involved in the processing of primary rRNA transcript to yield the immediate precursors to the large and small rRNAs (23S and 16S). Processes some mRNAs, and tRNAs when they are encoded in the rRNA operon. Processes pre-crRNA and tracrRNA of type II CRISPR loci if present in the organism.</text>
</comment>
<comment type="catalytic activity">
    <reaction evidence="1">
        <text>Endonucleolytic cleavage to 5'-phosphomonoester.</text>
        <dbReference type="EC" id="3.1.26.3"/>
    </reaction>
</comment>
<comment type="cofactor">
    <cofactor evidence="1">
        <name>Mg(2+)</name>
        <dbReference type="ChEBI" id="CHEBI:18420"/>
    </cofactor>
</comment>
<comment type="subunit">
    <text evidence="1">Homodimer.</text>
</comment>
<comment type="subcellular location">
    <subcellularLocation>
        <location evidence="1">Cytoplasm</location>
    </subcellularLocation>
</comment>
<comment type="similarity">
    <text evidence="1">Belongs to the ribonuclease III family.</text>
</comment>